<organism>
    <name type="scientific">Shigella sonnei (strain Ss046)</name>
    <dbReference type="NCBI Taxonomy" id="300269"/>
    <lineage>
        <taxon>Bacteria</taxon>
        <taxon>Pseudomonadati</taxon>
        <taxon>Pseudomonadota</taxon>
        <taxon>Gammaproteobacteria</taxon>
        <taxon>Enterobacterales</taxon>
        <taxon>Enterobacteriaceae</taxon>
        <taxon>Shigella</taxon>
    </lineage>
</organism>
<proteinExistence type="inferred from homology"/>
<protein>
    <recommendedName>
        <fullName evidence="1">UPF0225 protein YchJ</fullName>
    </recommendedName>
</protein>
<comment type="similarity">
    <text evidence="1">Belongs to the UPF0225 family.</text>
</comment>
<keyword id="KW-1185">Reference proteome</keyword>
<dbReference type="EMBL" id="CP000038">
    <property type="protein sequence ID" value="AAZ88614.1"/>
    <property type="molecule type" value="Genomic_DNA"/>
</dbReference>
<dbReference type="RefSeq" id="WP_001307143.1">
    <property type="nucleotide sequence ID" value="NC_007384.1"/>
</dbReference>
<dbReference type="SMR" id="Q3Z0U8"/>
<dbReference type="KEGG" id="ssn:SSON_1946"/>
<dbReference type="HOGENOM" id="CLU_099590_0_0_6"/>
<dbReference type="Proteomes" id="UP000002529">
    <property type="component" value="Chromosome"/>
</dbReference>
<dbReference type="Gene3D" id="3.10.450.50">
    <property type="match status" value="1"/>
</dbReference>
<dbReference type="HAMAP" id="MF_00612">
    <property type="entry name" value="UPF0225"/>
    <property type="match status" value="1"/>
</dbReference>
<dbReference type="InterPro" id="IPR032710">
    <property type="entry name" value="NTF2-like_dom_sf"/>
</dbReference>
<dbReference type="InterPro" id="IPR004027">
    <property type="entry name" value="SEC_C_motif"/>
</dbReference>
<dbReference type="InterPro" id="IPR023006">
    <property type="entry name" value="UPF0225"/>
</dbReference>
<dbReference type="InterPro" id="IPR048469">
    <property type="entry name" value="YchJ-like_M"/>
</dbReference>
<dbReference type="NCBIfam" id="NF002449">
    <property type="entry name" value="PRK01617.1"/>
    <property type="match status" value="1"/>
</dbReference>
<dbReference type="NCBIfam" id="NF002486">
    <property type="entry name" value="PRK01752.1"/>
    <property type="match status" value="1"/>
</dbReference>
<dbReference type="PANTHER" id="PTHR33747:SF1">
    <property type="entry name" value="ADENYLATE CYCLASE-ASSOCIATED CAP C-TERMINAL DOMAIN-CONTAINING PROTEIN"/>
    <property type="match status" value="1"/>
</dbReference>
<dbReference type="PANTHER" id="PTHR33747">
    <property type="entry name" value="UPF0225 PROTEIN SCO1677"/>
    <property type="match status" value="1"/>
</dbReference>
<dbReference type="Pfam" id="PF02810">
    <property type="entry name" value="SEC-C"/>
    <property type="match status" value="2"/>
</dbReference>
<dbReference type="Pfam" id="PF17775">
    <property type="entry name" value="YchJ_M-like"/>
    <property type="match status" value="1"/>
</dbReference>
<dbReference type="SUPFAM" id="SSF54427">
    <property type="entry name" value="NTF2-like"/>
    <property type="match status" value="1"/>
</dbReference>
<dbReference type="SUPFAM" id="SSF103642">
    <property type="entry name" value="Sec-C motif"/>
    <property type="match status" value="1"/>
</dbReference>
<gene>
    <name evidence="1" type="primary">ychJ</name>
    <name type="ordered locus">SSON_1946</name>
</gene>
<reference key="1">
    <citation type="journal article" date="2005" name="Nucleic Acids Res.">
        <title>Genome dynamics and diversity of Shigella species, the etiologic agents of bacillary dysentery.</title>
        <authorList>
            <person name="Yang F."/>
            <person name="Yang J."/>
            <person name="Zhang X."/>
            <person name="Chen L."/>
            <person name="Jiang Y."/>
            <person name="Yan Y."/>
            <person name="Tang X."/>
            <person name="Wang J."/>
            <person name="Xiong Z."/>
            <person name="Dong J."/>
            <person name="Xue Y."/>
            <person name="Zhu Y."/>
            <person name="Xu X."/>
            <person name="Sun L."/>
            <person name="Chen S."/>
            <person name="Nie H."/>
            <person name="Peng J."/>
            <person name="Xu J."/>
            <person name="Wang Y."/>
            <person name="Yuan Z."/>
            <person name="Wen Y."/>
            <person name="Yao Z."/>
            <person name="Shen Y."/>
            <person name="Qiang B."/>
            <person name="Hou Y."/>
            <person name="Yu J."/>
            <person name="Jin Q."/>
        </authorList>
    </citation>
    <scope>NUCLEOTIDE SEQUENCE [LARGE SCALE GENOMIC DNA]</scope>
    <source>
        <strain>Ss046</strain>
    </source>
</reference>
<name>YCHJ_SHISS</name>
<accession>Q3Z0U8</accession>
<sequence length="152" mass="16990">MSQLCPCGSAVEYSLCCHPYVSGEKVAPDPEHLMRSRYCAFVMQDADYLIKTWHPSCGAAALRAELMAGFAHTEWLGLTVFEHCWQDADNIGFVSFVARFTEGGKTGAIIERSRFLKENGQWYYIDGTRPQFGRNDPCPCGSGKKFKKCCGQ</sequence>
<feature type="chain" id="PRO_1000056744" description="UPF0225 protein YchJ">
    <location>
        <begin position="1"/>
        <end position="152"/>
    </location>
</feature>
<evidence type="ECO:0000255" key="1">
    <source>
        <dbReference type="HAMAP-Rule" id="MF_00612"/>
    </source>
</evidence>